<dbReference type="EMBL" id="AH000912">
    <property type="protein sequence ID" value="AAA25466.1"/>
    <property type="molecule type" value="Genomic_DNA"/>
</dbReference>
<dbReference type="EMBL" id="M13222">
    <property type="protein sequence ID" value="AAA25468.1"/>
    <property type="molecule type" value="mRNA"/>
</dbReference>
<dbReference type="PIR" id="A94007">
    <property type="entry name" value="YQNHG"/>
</dbReference>
<dbReference type="PDB" id="1AY2">
    <property type="method" value="X-ray"/>
    <property type="resolution" value="2.60 A"/>
    <property type="chains" value="A=9-165"/>
</dbReference>
<dbReference type="PDB" id="2HI2">
    <property type="method" value="X-ray"/>
    <property type="resolution" value="2.30 A"/>
    <property type="chains" value="A=8-165"/>
</dbReference>
<dbReference type="PDB" id="2HIL">
    <property type="method" value="EM"/>
    <property type="resolution" value="12.50 A"/>
    <property type="chains" value="A/B/C/D/E/F/G/H/I/J/K/L/M/N/O/P/Q/R=8-165"/>
</dbReference>
<dbReference type="PDB" id="2PIL">
    <property type="method" value="X-ray"/>
    <property type="resolution" value="2.60 A"/>
    <property type="chains" value="A=8-165"/>
</dbReference>
<dbReference type="PDB" id="5VXX">
    <property type="method" value="EM"/>
    <property type="resolution" value="5.10 A"/>
    <property type="chains" value="A/B/C/D/E/F/G/H/I/J/K/L/M/N/O/P/Q/R/S/T/U=8-165"/>
</dbReference>
<dbReference type="PDBsum" id="1AY2"/>
<dbReference type="PDBsum" id="2HI2"/>
<dbReference type="PDBsum" id="2HIL"/>
<dbReference type="PDBsum" id="2PIL"/>
<dbReference type="PDBsum" id="5VXX"/>
<dbReference type="EMDB" id="EMD-8739"/>
<dbReference type="SMR" id="P02974"/>
<dbReference type="DrugBank" id="DB04522">
    <property type="generic name" value="Dexfosfoserine"/>
</dbReference>
<dbReference type="DrugBank" id="DB04079">
    <property type="generic name" value="Heptane-1,2,3-Triol"/>
</dbReference>
<dbReference type="DrugBank" id="DB06838">
    <property type="generic name" value="methyl L-phenylalaninate"/>
</dbReference>
<dbReference type="GlyCosmos" id="P02974">
    <property type="glycosylation" value="1 site, No reported glycans"/>
</dbReference>
<dbReference type="iPTMnet" id="P02974"/>
<dbReference type="EvolutionaryTrace" id="P02974"/>
<dbReference type="GO" id="GO:0016020">
    <property type="term" value="C:membrane"/>
    <property type="evidence" value="ECO:0007669"/>
    <property type="project" value="UniProtKB-SubCell"/>
</dbReference>
<dbReference type="GO" id="GO:0009289">
    <property type="term" value="C:pilus"/>
    <property type="evidence" value="ECO:0007669"/>
    <property type="project" value="UniProtKB-SubCell"/>
</dbReference>
<dbReference type="GO" id="GO:0007155">
    <property type="term" value="P:cell adhesion"/>
    <property type="evidence" value="ECO:0007669"/>
    <property type="project" value="UniProtKB-KW"/>
</dbReference>
<dbReference type="Gene3D" id="3.30.700.10">
    <property type="entry name" value="Glycoprotein, Type 4 Pilin"/>
    <property type="match status" value="1"/>
</dbReference>
<dbReference type="InterPro" id="IPR012902">
    <property type="entry name" value="N_methyl_site"/>
</dbReference>
<dbReference type="InterPro" id="IPR001082">
    <property type="entry name" value="Pilin"/>
</dbReference>
<dbReference type="InterPro" id="IPR045584">
    <property type="entry name" value="Pilin-like"/>
</dbReference>
<dbReference type="InterPro" id="IPR050470">
    <property type="entry name" value="T4P/T2SS_Core"/>
</dbReference>
<dbReference type="NCBIfam" id="TIGR02532">
    <property type="entry name" value="IV_pilin_GFxxxE"/>
    <property type="match status" value="1"/>
</dbReference>
<dbReference type="PANTHER" id="PTHR30093">
    <property type="entry name" value="GENERAL SECRETION PATHWAY PROTEIN G"/>
    <property type="match status" value="1"/>
</dbReference>
<dbReference type="PANTHER" id="PTHR30093:SF34">
    <property type="entry name" value="PREPILIN PEPTIDASE-DEPENDENT PROTEIN D"/>
    <property type="match status" value="1"/>
</dbReference>
<dbReference type="Pfam" id="PF07963">
    <property type="entry name" value="N_methyl"/>
    <property type="match status" value="1"/>
</dbReference>
<dbReference type="Pfam" id="PF00114">
    <property type="entry name" value="Pilin"/>
    <property type="match status" value="1"/>
</dbReference>
<dbReference type="SUPFAM" id="SSF54523">
    <property type="entry name" value="Pili subunits"/>
    <property type="match status" value="1"/>
</dbReference>
<dbReference type="PROSITE" id="PS00409">
    <property type="entry name" value="PROKAR_NTER_METHYL"/>
    <property type="match status" value="1"/>
</dbReference>
<organism>
    <name type="scientific">Neisseria gonorrhoeae</name>
    <dbReference type="NCBI Taxonomy" id="485"/>
    <lineage>
        <taxon>Bacteria</taxon>
        <taxon>Pseudomonadati</taxon>
        <taxon>Pseudomonadota</taxon>
        <taxon>Betaproteobacteria</taxon>
        <taxon>Neisseriales</taxon>
        <taxon>Neisseriaceae</taxon>
        <taxon>Neisseria</taxon>
    </lineage>
</organism>
<reference key="1">
    <citation type="journal article" date="1984" name="Proc. Natl. Acad. Sci. U.S.A.">
        <title>Pilus genes of Neisseria gonorrheae: chromosomal organization and DNA sequence.</title>
        <authorList>
            <person name="Meyer T.F."/>
            <person name="Billyard E."/>
            <person name="Haas R."/>
            <person name="Storzbach S."/>
            <person name="So M."/>
        </authorList>
    </citation>
    <scope>NUCLEOTIDE SEQUENCE [GENOMIC DNA]</scope>
    <source>
        <strain>MS11</strain>
    </source>
</reference>
<reference key="2">
    <citation type="journal article" date="1986" name="Proc. Natl. Acad. Sci. U.S.A.">
        <title>Piliation control mechanisms in Neisseria gonorrhoeae.</title>
        <authorList>
            <person name="Bergstroem S."/>
            <person name="Robbins K."/>
            <person name="Koomey J.M."/>
            <person name="Swanson J."/>
        </authorList>
    </citation>
    <scope>NUCLEOTIDE SEQUENCE [GENOMIC DNA]</scope>
</reference>
<reference key="3">
    <citation type="journal article" date="1991" name="EMBO J.">
        <title>Phase variation of gonococcal pili by frameshift mutation in pilC, a novel gene for pilus assembly.</title>
        <authorList>
            <person name="Jonsson A.B."/>
            <person name="Nyberg G."/>
            <person name="Normark S."/>
        </authorList>
    </citation>
    <scope>NUCLEOTIDE SEQUENCE [GENOMIC DNA]</scope>
</reference>
<reference key="4">
    <citation type="journal article" date="1992" name="Proc. Natl. Acad. Sci. U.S.A.">
        <title>Neisseria gonorrhoeae PilC expression provides a selective mechanism for structural diversity of pili.</title>
        <authorList>
            <person name="Jonsson A.B."/>
            <person name="Pfeifer J."/>
            <person name="Normark S."/>
        </authorList>
    </citation>
    <scope>NUCLEOTIDE SEQUENCE [GENOMIC DNA]</scope>
</reference>
<reference key="5">
    <citation type="journal article" date="1978" name="Biochemistry">
        <title>Neisseria pili proteins: amino-terminal amino acid sequences and identification of an unusual amino acid.</title>
        <authorList>
            <person name="Hermodson M.A."/>
            <person name="Chen K.C."/>
            <person name="Buchanan T.M."/>
        </authorList>
    </citation>
    <scope>PROTEIN SEQUENCE OF 8-36</scope>
    <scope>METHYLATION AT PHE-8</scope>
    <source>
        <strain>33</strain>
        <strain>7122</strain>
        <strain>ATCC 33084 / F62 / M-1914</strain>
        <strain>B</strain>
    </source>
</reference>
<reference key="6">
    <citation type="journal article" date="1984" name="J. Exp. Med.">
        <title>Gonococcal pili. Primary structure and receptor binding domain.</title>
        <authorList>
            <person name="Schoolnik G.K."/>
            <person name="Fernandez R."/>
            <person name="Tai J.Y."/>
            <person name="Rothbard J."/>
            <person name="Gotschlich E.C."/>
        </authorList>
    </citation>
    <scope>PROTEIN SEQUENCE OF 8-165</scope>
    <scope>PRESENCE OF PHOSPHORYLATION</scope>
    <source>
        <strain>MS11</strain>
    </source>
</reference>
<reference key="7">
    <citation type="journal article" date="2004" name="Proc. Natl. Acad. Sci. U.S.A.">
        <title>Unique modifications with phosphocholine and phosphoethanolamine define alternate antigenic forms of Neisseria gonorrhoeae type IV pili.</title>
        <authorList>
            <person name="Hegge F.T."/>
            <person name="Hitchen P.G."/>
            <person name="Aas F.E."/>
            <person name="Kristiansen H."/>
            <person name="Lovold C."/>
            <person name="Egge-Jacobsen W."/>
            <person name="Panico M."/>
            <person name="Leong W.Y."/>
            <person name="Bull V."/>
            <person name="Virji M."/>
            <person name="Morris H.R."/>
            <person name="Dell A."/>
            <person name="Koomey M."/>
        </authorList>
    </citation>
    <scope>PHOSPHORYLATION AT SER-75</scope>
    <source>
        <strain>MS11</strain>
    </source>
</reference>
<reference key="8">
    <citation type="journal article" date="2006" name="J. Biol. Chem.">
        <title>Neisseria gonorrhoeae type IV pili undergo multisite, hierarchical modifications with phosphoethanolamine and phosphocholine requiring an enzyme structurally related to lipopolysaccharide phosphoethanolamine transferases.</title>
        <authorList>
            <person name="Aas F.E."/>
            <person name="Egge-Jacobsen W."/>
            <person name="Winther-Larsen H.C."/>
            <person name="Lovold C."/>
            <person name="Hitchen P.G."/>
            <person name="Dell A."/>
            <person name="Koomey M."/>
        </authorList>
    </citation>
    <scope>PHOSPHORYLATION AT SER-75</scope>
    <source>
        <strain>MS11</strain>
    </source>
</reference>
<reference key="9">
    <citation type="journal article" date="2011" name="Cell. Microbiol.">
        <title>Activation of NF-kappaB by Neisseria gonorrhoeae is associated with microcolony formation and type IV pilus retraction.</title>
        <authorList>
            <person name="Dietrich M."/>
            <person name="Bartfeld S."/>
            <person name="Munke R."/>
            <person name="Lange C."/>
            <person name="Ogilvie L.A."/>
            <person name="Friedrich A."/>
            <person name="Meyer T.F."/>
        </authorList>
    </citation>
    <scope>FUNCTION</scope>
    <scope>DISRUPTION PHENOTYPE</scope>
</reference>
<reference key="10">
    <citation type="journal article" date="2016" name="PLoS Genet.">
        <title>The Pilin N-terminal Domain Maintains Neisseria gonorrhoeae Transformation Competence during Pilus Phase Variation.</title>
        <authorList>
            <person name="Obergfell K.P."/>
            <person name="Seifert H.S."/>
        </authorList>
    </citation>
    <scope>FUNCTION</scope>
    <scope>REGION</scope>
    <scope>DISRUPTION PHENOTYPE</scope>
    <scope>MUTAGENESIS OF CYS-128</scope>
</reference>
<reference key="11">
    <citation type="journal article" date="1995" name="Nature">
        <title>Structure of the fibre-forming protein pilin at 2.6-A resolution.</title>
        <authorList>
            <person name="Parge H.E."/>
            <person name="Forest K.T."/>
            <person name="Hickey M.J."/>
            <person name="Christensen D.A."/>
            <person name="Getzoff E."/>
            <person name="Tainer J.A."/>
        </authorList>
    </citation>
    <scope>X-RAY CRYSTALLOGRAPHY (2.6 ANGSTROMS) OF 8-165</scope>
    <scope>METHYLATION AT PHE-8</scope>
    <scope>GLYCOSYLATION AT SER-70</scope>
    <scope>SEQUENCE REVISION TO C-TERMINUS</scope>
    <source>
        <strain>MS11</strain>
    </source>
</reference>
<reference key="12">
    <citation type="journal article" date="1999" name="Mol. Microbiol.">
        <title>Crystallographic structure reveals phosphorylated pilin from Neisseria: phosphoserine sites modify type IV pilus surface chemistry and fibre morphology.</title>
        <authorList>
            <person name="Forest K.T."/>
            <person name="Dunham S.A."/>
            <person name="Koomey M."/>
            <person name="Tainer J.A."/>
        </authorList>
    </citation>
    <scope>X-RAY CRYSTALLOGRAPHY (2.6 ANGSTROMS) OF 8-165</scope>
    <scope>PHOSPHORYLATION AT SER-75</scope>
    <scope>GLYCOSYLATION AT SER-70</scope>
    <scope>PHOSPHORYLATION AT SER-101</scope>
    <scope>MUTAGENESIS OF SER-75</scope>
    <scope>IDENTIFICATION BY MASS SPECTROMETRY</scope>
    <source>
        <strain>MS11</strain>
    </source>
</reference>
<reference key="13">
    <citation type="journal article" date="2006" name="Mol. Cell">
        <title>Type IV pilus structure by cryo-electron microscopy and crystallography: implications for pilus assembly and functions.</title>
        <authorList>
            <person name="Craig L."/>
            <person name="Volkmann N."/>
            <person name="Arvai A.S."/>
            <person name="Pique M.E."/>
            <person name="Yeager M."/>
            <person name="Egelman E.H."/>
            <person name="Tainer J.A."/>
        </authorList>
    </citation>
    <scope>STRUCTURE BY ELECTRON MICROSCOPY (12.5 ANGSTROMS)</scope>
    <scope>GLYCOSYLATION AT SER-70</scope>
    <scope>X-RAY CRYSTALLOGRAPHY (2.3 ANGSTROMS) OF 8-165</scope>
    <source>
        <strain>MS11</strain>
    </source>
</reference>
<feature type="propeptide" id="PRO_0000024154" description="Leader sequence" evidence="2 9 10">
    <location>
        <begin position="1"/>
        <end position="7"/>
    </location>
</feature>
<feature type="chain" id="PRO_0000024155" description="Type IV major pilin protein PilE1">
    <location>
        <begin position="8"/>
        <end position="165"/>
    </location>
</feature>
<feature type="transmembrane region" description="Helical" evidence="1">
    <location>
        <begin position="8"/>
        <end position="28"/>
    </location>
</feature>
<feature type="region of interest" description="Disordered" evidence="3">
    <location>
        <begin position="137"/>
        <end position="165"/>
    </location>
</feature>
<feature type="compositionally biased region" description="Basic and acidic residues" evidence="3">
    <location>
        <begin position="137"/>
        <end position="153"/>
    </location>
</feature>
<feature type="modified residue" description="N-methylphenylalanine" evidence="2 9 10 11">
    <location>
        <position position="8"/>
    </location>
</feature>
<feature type="modified residue" description="O-(2-aminoethylphosphoryl)serine; alternate" evidence="4 5 6">
    <location>
        <position position="75"/>
    </location>
</feature>
<feature type="modified residue" description="O-(2-cholinephosphoryl)serine; alternate" evidence="4 5 6">
    <location>
        <position position="75"/>
    </location>
</feature>
<feature type="modified residue" description="Phosphoserine; alternate" evidence="4 5 6">
    <location>
        <position position="75"/>
    </location>
</feature>
<feature type="modified residue" description="O-(sn-1-glycerophosphoryl)serine; partial" evidence="4">
    <location>
        <position position="101"/>
    </location>
</feature>
<feature type="glycosylation site" description="O-linked (DADDGlc) serine" evidence="4 7 11">
    <location>
        <position position="70"/>
    </location>
</feature>
<feature type="disulfide bond" evidence="10">
    <location>
        <begin position="128"/>
        <end position="158"/>
    </location>
</feature>
<feature type="mutagenesis site" description="Alters the morphology of fibers." evidence="4">
    <original>S</original>
    <variation>A</variation>
    <location>
        <position position="75"/>
    </location>
</feature>
<feature type="mutagenesis site" description="Loss of pili." evidence="8">
    <original>C</original>
    <variation>G</variation>
    <location>
        <position position="128"/>
    </location>
</feature>
<feature type="sequence conflict" description="In Ref. 1, 2, 3, 4 and 6." evidence="12" ref="1 2 3 4 6">
    <original>NF</original>
    <variation>KAS</variation>
    <location>
        <begin position="161"/>
        <end position="162"/>
    </location>
</feature>
<feature type="helix" evidence="13">
    <location>
        <begin position="10"/>
        <end position="27"/>
    </location>
</feature>
<feature type="turn" evidence="13">
    <location>
        <begin position="28"/>
        <end position="30"/>
    </location>
</feature>
<feature type="helix" evidence="13">
    <location>
        <begin position="31"/>
        <end position="47"/>
    </location>
</feature>
<feature type="helix" evidence="13">
    <location>
        <begin position="51"/>
        <end position="61"/>
    </location>
</feature>
<feature type="helix" evidence="13">
    <location>
        <begin position="68"/>
        <end position="71"/>
    </location>
</feature>
<feature type="helix" evidence="13">
    <location>
        <begin position="77"/>
        <end position="79"/>
    </location>
</feature>
<feature type="strand" evidence="13">
    <location>
        <begin position="83"/>
        <end position="91"/>
    </location>
</feature>
<feature type="strand" evidence="13">
    <location>
        <begin position="94"/>
        <end position="99"/>
    </location>
</feature>
<feature type="strand" evidence="13">
    <location>
        <begin position="101"/>
        <end position="104"/>
    </location>
</feature>
<feature type="strand" evidence="13">
    <location>
        <begin position="106"/>
        <end position="108"/>
    </location>
</feature>
<feature type="strand" evidence="13">
    <location>
        <begin position="112"/>
        <end position="119"/>
    </location>
</feature>
<feature type="strand" evidence="13">
    <location>
        <begin position="121"/>
        <end position="130"/>
    </location>
</feature>
<feature type="strand" evidence="13">
    <location>
        <begin position="132"/>
        <end position="136"/>
    </location>
</feature>
<feature type="strand" evidence="13">
    <location>
        <begin position="139"/>
        <end position="142"/>
    </location>
</feature>
<feature type="helix" evidence="13">
    <location>
        <begin position="151"/>
        <end position="153"/>
    </location>
</feature>
<feature type="strand" evidence="13">
    <location>
        <begin position="156"/>
        <end position="158"/>
    </location>
</feature>
<keyword id="KW-0002">3D-structure</keyword>
<keyword id="KW-0130">Cell adhesion</keyword>
<keyword id="KW-0903">Direct protein sequencing</keyword>
<keyword id="KW-1015">Disulfide bond</keyword>
<keyword id="KW-0281">Fimbrium</keyword>
<keyword id="KW-0325">Glycoprotein</keyword>
<keyword id="KW-0472">Membrane</keyword>
<keyword id="KW-0488">Methylation</keyword>
<keyword id="KW-0597">Phosphoprotein</keyword>
<keyword id="KW-0812">Transmembrane</keyword>
<keyword id="KW-1133">Transmembrane helix</keyword>
<accession>P02974</accession>
<protein>
    <recommendedName>
        <fullName>Type IV major pilin protein PilE1</fullName>
    </recommendedName>
    <alternativeName>
        <fullName>MS11 antigen</fullName>
    </alternativeName>
    <alternativeName>
        <fullName>Pilin</fullName>
    </alternativeName>
</protein>
<proteinExistence type="evidence at protein level"/>
<evidence type="ECO:0000255" key="1"/>
<evidence type="ECO:0000255" key="2">
    <source>
        <dbReference type="PROSITE-ProRule" id="PRU01070"/>
    </source>
</evidence>
<evidence type="ECO:0000256" key="3">
    <source>
        <dbReference type="SAM" id="MobiDB-lite"/>
    </source>
</evidence>
<evidence type="ECO:0000269" key="4">
    <source>
    </source>
</evidence>
<evidence type="ECO:0000269" key="5">
    <source>
    </source>
</evidence>
<evidence type="ECO:0000269" key="6">
    <source>
    </source>
</evidence>
<evidence type="ECO:0000269" key="7">
    <source>
    </source>
</evidence>
<evidence type="ECO:0000269" key="8">
    <source>
    </source>
</evidence>
<evidence type="ECO:0000269" key="9">
    <source>
    </source>
</evidence>
<evidence type="ECO:0000269" key="10">
    <source>
    </source>
</evidence>
<evidence type="ECO:0000269" key="11">
    <source>
    </source>
</evidence>
<evidence type="ECO:0000305" key="12"/>
<evidence type="ECO:0007829" key="13">
    <source>
        <dbReference type="PDB" id="2HI2"/>
    </source>
</evidence>
<name>FMM1_NEIGO</name>
<sequence length="165" mass="17944">MNTLQKGFTLIELMIVIAIVGILAAVALPAYQDYTARAQVSEAILLAEGQKSAVTEYYLNHGKWPENNTSAGVASPPSDIKGKYVKEVEVKNGVVTATMLSSGVNNEIKGKKLSLWARRENGSVKWFCGQPVTRTDDDTVADAKDGKEIDTKHLPSTCRDNFDAK</sequence>
<gene>
    <name type="primary">pilE1</name>
</gene>
<comment type="function">
    <text evidence="8">Major component of the type IV pilus (T4P) that plays a role in cellular adherence, microcolony formation, resistance to neutrophil mediated killing, twitching motility as well as transformation (PubMed:27213957). Mediates the attachment and the formation of bacterial microcolonies on host epithelial cells. Mechanistically, pili retractation induces host NF-kappa-B activation in infected cells, which is temporally associated with the formation of gonococcal microcolonies (PubMed:27213957).</text>
</comment>
<comment type="subunit">
    <text>The pili are polar flexible filaments of about 5.4 nanometers diameter and 2.5 micrometers average length; they consist of only a single polypeptide chain arranged in a helical configuration of five subunits per turn in the assembled pilus.</text>
</comment>
<comment type="subcellular location">
    <subcellularLocation>
        <location>Fimbrium</location>
    </subcellularLocation>
    <subcellularLocation>
        <location evidence="1">Membrane</location>
        <topology evidence="1">Single-pass membrane protein</topology>
    </subcellularLocation>
</comment>
<comment type="PTM">
    <text evidence="4 11">The O-linked glycan identified as Gal-GlcNAc disaccharide in PubMed:7477282 and PubMed:10048019 is now identified as either a hexosyl-diacetamidotrideoxyhexoside (DATDHex) by mass spectrometry in PubMed:15249686, or alpha-D-galactopyranosyl-(1-&gt;3)-2,4-diacetamido-2,4-dideoxy-beta-D-glucopyranoside (DADDGlc) by X-ray diffraction in PubMed:16949362. It is not clear whether there is a chemical difference in the glycosylation of the two derivatives of strain MS11 used in these experiments, or not.</text>
</comment>
<comment type="PTM">
    <text evidence="9 11">In some MS11 derivative strains, Ser-75 is modified to O-(2-aminoethylphosphoryl)serine, and in some other derivatives that can be secondarily modified to O-(2-cholinephosphoryl)serine by N-methylation.</text>
</comment>
<comment type="disruption phenotype">
    <text evidence="8">Deletion mutants show a complete absence of observable pili.</text>
</comment>
<comment type="similarity">
    <text evidence="12">Belongs to the N-Me-Phe pilin family.</text>
</comment>
<comment type="caution">
    <text evidence="12">In PubMed:413571 it is said that 50% of the peptides have N-methyl-Phe and 50% begin with Thr-9. N-terminal methylation produces preview during Edman degradation, which makes this appear to happen when the peptide is completely N-terminal methylated.</text>
</comment>